<evidence type="ECO:0000250" key="1">
    <source>
        <dbReference type="UniProtKB" id="P20132"/>
    </source>
</evidence>
<evidence type="ECO:0000256" key="2">
    <source>
        <dbReference type="SAM" id="MobiDB-lite"/>
    </source>
</evidence>
<evidence type="ECO:0000269" key="3">
    <source>
    </source>
</evidence>
<evidence type="ECO:0000269" key="4">
    <source>
    </source>
</evidence>
<evidence type="ECO:0000269" key="5">
    <source>
    </source>
</evidence>
<evidence type="ECO:0000269" key="6">
    <source>
    </source>
</evidence>
<evidence type="ECO:0000269" key="7">
    <source>
    </source>
</evidence>
<evidence type="ECO:0000269" key="8">
    <source>
    </source>
</evidence>
<evidence type="ECO:0000269" key="9">
    <source>
    </source>
</evidence>
<evidence type="ECO:0000303" key="10">
    <source>
    </source>
</evidence>
<evidence type="ECO:0000303" key="11">
    <source>
    </source>
</evidence>
<evidence type="ECO:0000305" key="12"/>
<evidence type="ECO:0007829" key="13">
    <source>
        <dbReference type="PDB" id="1PWE"/>
    </source>
</evidence>
<evidence type="ECO:0007829" key="14">
    <source>
        <dbReference type="PDB" id="1PWH"/>
    </source>
</evidence>
<organism>
    <name type="scientific">Rattus norvegicus</name>
    <name type="common">Rat</name>
    <dbReference type="NCBI Taxonomy" id="10116"/>
    <lineage>
        <taxon>Eukaryota</taxon>
        <taxon>Metazoa</taxon>
        <taxon>Chordata</taxon>
        <taxon>Craniata</taxon>
        <taxon>Vertebrata</taxon>
        <taxon>Euteleostomi</taxon>
        <taxon>Mammalia</taxon>
        <taxon>Eutheria</taxon>
        <taxon>Euarchontoglires</taxon>
        <taxon>Glires</taxon>
        <taxon>Rodentia</taxon>
        <taxon>Myomorpha</taxon>
        <taxon>Muroidea</taxon>
        <taxon>Muridae</taxon>
        <taxon>Murinae</taxon>
        <taxon>Rattus</taxon>
    </lineage>
</organism>
<accession>P09367</accession>
<accession>Q5M8C4</accession>
<feature type="initiator methionine" description="Removed" evidence="8">
    <location>
        <position position="1"/>
    </location>
</feature>
<feature type="chain" id="PRO_0000185596" description="L-serine dehydratase/L-threonine deaminase">
    <location>
        <begin position="2"/>
        <end position="363"/>
    </location>
</feature>
<feature type="region of interest" description="Disordered" evidence="2">
    <location>
        <begin position="74"/>
        <end position="98"/>
    </location>
</feature>
<feature type="binding site" evidence="1">
    <location>
        <position position="164"/>
    </location>
    <ligand>
        <name>pyridoxal 5'-phosphate</name>
        <dbReference type="ChEBI" id="CHEBI:597326"/>
    </ligand>
</feature>
<feature type="modified residue" description="N-acetylalanine" evidence="8">
    <location>
        <position position="2"/>
    </location>
</feature>
<feature type="modified residue" description="N6-(pyridoxal phosphate)lysine" evidence="4 7 8">
    <location>
        <position position="41"/>
    </location>
</feature>
<feature type="splice variant" id="VSP_024798" description="In isoform 2." evidence="10 11">
    <location>
        <begin position="65"/>
        <end position="100"/>
    </location>
</feature>
<feature type="sequence conflict" description="In Ref. 5; AA sequence." evidence="12" ref="5">
    <original>P</original>
    <variation>T</variation>
    <location>
        <position position="12"/>
    </location>
</feature>
<feature type="sequence conflict" description="In Ref. 1; AAA42123." evidence="12" ref="1">
    <original>S</original>
    <variation>T</variation>
    <location>
        <position position="16"/>
    </location>
</feature>
<feature type="sequence conflict" description="In Ref. 1; AAA42123." evidence="12" ref="1">
    <original>P</original>
    <variation>Q</variation>
    <location>
        <position position="164"/>
    </location>
</feature>
<feature type="sequence conflict" description="In Ref. 5; AA sequence." evidence="12" ref="5">
    <original>P</original>
    <variation>T</variation>
    <location>
        <position position="276"/>
    </location>
</feature>
<feature type="sequence conflict" description="In Ref. 3; CAA68721." evidence="12" ref="3">
    <original>G</original>
    <variation>A</variation>
    <location>
        <position position="325"/>
    </location>
</feature>
<feature type="strand" evidence="14">
    <location>
        <begin position="13"/>
        <end position="15"/>
    </location>
</feature>
<feature type="helix" evidence="14">
    <location>
        <begin position="17"/>
        <end position="23"/>
    </location>
</feature>
<feature type="strand" evidence="14">
    <location>
        <begin position="27"/>
        <end position="30"/>
    </location>
</feature>
<feature type="helix" evidence="14">
    <location>
        <begin position="32"/>
        <end position="34"/>
    </location>
</feature>
<feature type="helix" evidence="14">
    <location>
        <begin position="42"/>
        <end position="54"/>
    </location>
</feature>
<feature type="strand" evidence="14">
    <location>
        <begin position="59"/>
        <end position="63"/>
    </location>
</feature>
<feature type="helix" evidence="14">
    <location>
        <begin position="103"/>
        <end position="114"/>
    </location>
</feature>
<feature type="strand" evidence="14">
    <location>
        <begin position="119"/>
        <end position="123"/>
    </location>
</feature>
<feature type="helix" evidence="14">
    <location>
        <begin position="129"/>
        <end position="137"/>
    </location>
</feature>
<feature type="strand" evidence="14">
    <location>
        <begin position="141"/>
        <end position="144"/>
    </location>
</feature>
<feature type="helix" evidence="14">
    <location>
        <begin position="149"/>
        <end position="161"/>
    </location>
</feature>
<feature type="strand" evidence="14">
    <location>
        <begin position="166"/>
        <end position="169"/>
    </location>
</feature>
<feature type="turn" evidence="13">
    <location>
        <begin position="171"/>
        <end position="173"/>
    </location>
</feature>
<feature type="helix" evidence="14">
    <location>
        <begin position="175"/>
        <end position="191"/>
    </location>
</feature>
<feature type="strand" evidence="14">
    <location>
        <begin position="199"/>
        <end position="202"/>
    </location>
</feature>
<feature type="strand" evidence="14">
    <location>
        <begin position="204"/>
        <end position="206"/>
    </location>
</feature>
<feature type="helix" evidence="14">
    <location>
        <begin position="207"/>
        <end position="219"/>
    </location>
</feature>
<feature type="strand" evidence="14">
    <location>
        <begin position="226"/>
        <end position="231"/>
    </location>
</feature>
<feature type="helix" evidence="14">
    <location>
        <begin position="236"/>
        <end position="243"/>
    </location>
</feature>
<feature type="helix" evidence="14">
    <location>
        <begin position="257"/>
        <end position="259"/>
    </location>
</feature>
<feature type="helix" evidence="14">
    <location>
        <begin position="266"/>
        <end position="272"/>
    </location>
</feature>
<feature type="turn" evidence="14">
    <location>
        <begin position="273"/>
        <end position="276"/>
    </location>
</feature>
<feature type="strand" evidence="14">
    <location>
        <begin position="277"/>
        <end position="282"/>
    </location>
</feature>
<feature type="helix" evidence="14">
    <location>
        <begin position="284"/>
        <end position="298"/>
    </location>
</feature>
<feature type="helix" evidence="14">
    <location>
        <begin position="304"/>
        <end position="314"/>
    </location>
</feature>
<feature type="helix" evidence="14">
    <location>
        <begin position="317"/>
        <end position="323"/>
    </location>
</feature>
<feature type="strand" evidence="13">
    <location>
        <begin position="324"/>
        <end position="327"/>
    </location>
</feature>
<feature type="strand" evidence="14">
    <location>
        <begin position="334"/>
        <end position="337"/>
    </location>
</feature>
<feature type="helix" evidence="14">
    <location>
        <begin position="346"/>
        <end position="355"/>
    </location>
</feature>
<feature type="turn" evidence="14">
    <location>
        <begin position="356"/>
        <end position="359"/>
    </location>
</feature>
<comment type="function">
    <text evidence="5 9">Catalyzes the pyridoxal-phosphate-dependent dehydrative deamination of L-threonine and L-serine to ammonia and alpha-ketobutyrate and pyruvate, respectively.</text>
</comment>
<comment type="catalytic activity">
    <reaction evidence="5 9">
        <text>L-serine = pyruvate + NH4(+)</text>
        <dbReference type="Rhea" id="RHEA:19169"/>
        <dbReference type="ChEBI" id="CHEBI:15361"/>
        <dbReference type="ChEBI" id="CHEBI:28938"/>
        <dbReference type="ChEBI" id="CHEBI:33384"/>
        <dbReference type="EC" id="4.3.1.17"/>
    </reaction>
</comment>
<comment type="catalytic activity">
    <reaction evidence="5 9">
        <text>L-threonine = 2-oxobutanoate + NH4(+)</text>
        <dbReference type="Rhea" id="RHEA:22108"/>
        <dbReference type="ChEBI" id="CHEBI:16763"/>
        <dbReference type="ChEBI" id="CHEBI:28938"/>
        <dbReference type="ChEBI" id="CHEBI:57926"/>
        <dbReference type="EC" id="4.3.1.19"/>
    </reaction>
</comment>
<comment type="cofactor">
    <cofactor evidence="4 7 8">
        <name>pyridoxal 5'-phosphate</name>
        <dbReference type="ChEBI" id="CHEBI:597326"/>
    </cofactor>
</comment>
<comment type="biophysicochemical properties">
    <kinetics>
        <KM evidence="5">45 mM for L-serine</KM>
        <KM evidence="9">61 mM for L-serine</KM>
        <KM evidence="5">57 mM for L-threonine</KM>
        <KM evidence="9">120 mM for L-threonine</KM>
        <Vmax evidence="5">200.0 nmol/min/mg enzyme for L-serine</Vmax>
        <Vmax evidence="5">116.0 nmol/min/mg enzyme for L-threonine</Vmax>
    </kinetics>
</comment>
<comment type="pathway">
    <text>Carbohydrate biosynthesis; gluconeogenesis.</text>
</comment>
<comment type="subunit">
    <text evidence="3 4 5">Homodimer.</text>
</comment>
<comment type="subcellular location">
    <subcellularLocation>
        <location evidence="6">Cytoplasm</location>
    </subcellularLocation>
</comment>
<comment type="alternative products">
    <event type="alternative splicing"/>
    <isoform>
        <id>P09367-1</id>
        <name>1</name>
        <sequence type="displayed"/>
    </isoform>
    <isoform>
        <id>P09367-2</id>
        <name>2</name>
        <sequence type="described" ref="VSP_024798"/>
    </isoform>
</comment>
<comment type="tissue specificity">
    <text evidence="5 6">Predominantly expressed in the periportal regions of the liver.</text>
</comment>
<comment type="induction">
    <text>By glucocorticoids and glucagon.</text>
</comment>
<comment type="similarity">
    <text evidence="12">Belongs to the serine/threonine dehydratase family.</text>
</comment>
<keyword id="KW-0002">3D-structure</keyword>
<keyword id="KW-0007">Acetylation</keyword>
<keyword id="KW-0025">Alternative splicing</keyword>
<keyword id="KW-0963">Cytoplasm</keyword>
<keyword id="KW-0903">Direct protein sequencing</keyword>
<keyword id="KW-0312">Gluconeogenesis</keyword>
<keyword id="KW-0443">Lipid metabolism</keyword>
<keyword id="KW-0456">Lyase</keyword>
<keyword id="KW-0663">Pyridoxal phosphate</keyword>
<keyword id="KW-1185">Reference proteome</keyword>
<gene>
    <name type="primary">Sds</name>
</gene>
<dbReference type="EC" id="4.3.1.17" evidence="5 9"/>
<dbReference type="EC" id="4.3.1.19" evidence="5 9"/>
<dbReference type="EMBL" id="J03863">
    <property type="protein sequence ID" value="AAA42123.1"/>
    <property type="molecule type" value="mRNA"/>
</dbReference>
<dbReference type="EMBL" id="X13119">
    <property type="protein sequence ID" value="CAA31511.1"/>
    <property type="molecule type" value="Genomic_DNA"/>
</dbReference>
<dbReference type="EMBL" id="Y00752">
    <property type="protein sequence ID" value="CAA68721.1"/>
    <property type="molecule type" value="mRNA"/>
</dbReference>
<dbReference type="EMBL" id="BC088110">
    <property type="protein sequence ID" value="AAH88110.1"/>
    <property type="molecule type" value="mRNA"/>
</dbReference>
<dbReference type="PIR" id="S01009">
    <property type="entry name" value="DWRTT"/>
</dbReference>
<dbReference type="PIR" id="S01973">
    <property type="entry name" value="S01973"/>
</dbReference>
<dbReference type="RefSeq" id="NP_446414.3">
    <molecule id="P09367-2"/>
    <property type="nucleotide sequence ID" value="NM_053962.3"/>
</dbReference>
<dbReference type="PDB" id="1PWE">
    <property type="method" value="X-ray"/>
    <property type="resolution" value="2.80 A"/>
    <property type="chains" value="A/B/C/D/E/F=1-363"/>
</dbReference>
<dbReference type="PDB" id="1PWH">
    <property type="method" value="X-ray"/>
    <property type="resolution" value="2.60 A"/>
    <property type="chains" value="A/B/C/D=1-363"/>
</dbReference>
<dbReference type="PDBsum" id="1PWE"/>
<dbReference type="PDBsum" id="1PWH"/>
<dbReference type="SMR" id="P09367"/>
<dbReference type="FunCoup" id="P09367">
    <property type="interactions" value="218"/>
</dbReference>
<dbReference type="STRING" id="10116.ENSRNOP00000001876"/>
<dbReference type="ChEMBL" id="CHEMBL1075240"/>
<dbReference type="iPTMnet" id="P09367"/>
<dbReference type="PhosphoSitePlus" id="P09367"/>
<dbReference type="PaxDb" id="10116-ENSRNOP00000001876"/>
<dbReference type="Ensembl" id="ENSRNOT00000001875.5">
    <molecule id="P09367-2"/>
    <property type="protein sequence ID" value="ENSRNOP00000001875.3"/>
    <property type="gene ID" value="ENSRNOG00000001388.7"/>
</dbReference>
<dbReference type="GeneID" id="25044"/>
<dbReference type="KEGG" id="rno:25044"/>
<dbReference type="AGR" id="RGD:67376"/>
<dbReference type="CTD" id="10993"/>
<dbReference type="RGD" id="67376">
    <property type="gene designation" value="Sds"/>
</dbReference>
<dbReference type="VEuPathDB" id="HostDB:ENSRNOG00000001388"/>
<dbReference type="eggNOG" id="KOG1250">
    <property type="taxonomic scope" value="Eukaryota"/>
</dbReference>
<dbReference type="GeneTree" id="ENSGT00940000160172"/>
<dbReference type="HOGENOM" id="CLU_021152_3_0_1"/>
<dbReference type="InParanoid" id="P09367"/>
<dbReference type="OrthoDB" id="50991at9989"/>
<dbReference type="PhylomeDB" id="P09367"/>
<dbReference type="BRENDA" id="4.3.1.17">
    <property type="organism ID" value="5301"/>
</dbReference>
<dbReference type="Reactome" id="R-RNO-8849175">
    <property type="pathway name" value="Threonine catabolism"/>
</dbReference>
<dbReference type="SABIO-RK" id="P09367"/>
<dbReference type="UniPathway" id="UPA00138"/>
<dbReference type="EvolutionaryTrace" id="P09367"/>
<dbReference type="PRO" id="PR:P09367"/>
<dbReference type="Proteomes" id="UP000002494">
    <property type="component" value="Chromosome 12"/>
</dbReference>
<dbReference type="Bgee" id="ENSRNOG00000001388">
    <property type="expression patterns" value="Expressed in Ammon's horn and 15 other cell types or tissues"/>
</dbReference>
<dbReference type="ExpressionAtlas" id="P09367">
    <property type="expression patterns" value="baseline and differential"/>
</dbReference>
<dbReference type="GO" id="GO:0005737">
    <property type="term" value="C:cytoplasm"/>
    <property type="evidence" value="ECO:0007669"/>
    <property type="project" value="UniProtKB-SubCell"/>
</dbReference>
<dbReference type="GO" id="GO:0003941">
    <property type="term" value="F:L-serine ammonia-lyase activity"/>
    <property type="evidence" value="ECO:0000314"/>
    <property type="project" value="UniProtKB"/>
</dbReference>
<dbReference type="GO" id="GO:0042803">
    <property type="term" value="F:protein homodimerization activity"/>
    <property type="evidence" value="ECO:0000266"/>
    <property type="project" value="RGD"/>
</dbReference>
<dbReference type="GO" id="GO:0030170">
    <property type="term" value="F:pyridoxal phosphate binding"/>
    <property type="evidence" value="ECO:0000266"/>
    <property type="project" value="RGD"/>
</dbReference>
<dbReference type="GO" id="GO:0004794">
    <property type="term" value="F:threonine deaminase activity"/>
    <property type="evidence" value="ECO:0000314"/>
    <property type="project" value="UniProtKB"/>
</dbReference>
<dbReference type="GO" id="GO:0006094">
    <property type="term" value="P:gluconeogenesis"/>
    <property type="evidence" value="ECO:0000304"/>
    <property type="project" value="RGD"/>
</dbReference>
<dbReference type="GO" id="GO:0006565">
    <property type="term" value="P:L-serine catabolic process"/>
    <property type="evidence" value="ECO:0000266"/>
    <property type="project" value="RGD"/>
</dbReference>
<dbReference type="GO" id="GO:0006629">
    <property type="term" value="P:lipid metabolic process"/>
    <property type="evidence" value="ECO:0007669"/>
    <property type="project" value="UniProtKB-KW"/>
</dbReference>
<dbReference type="GO" id="GO:0065003">
    <property type="term" value="P:protein-containing complex assembly"/>
    <property type="evidence" value="ECO:0000314"/>
    <property type="project" value="RGD"/>
</dbReference>
<dbReference type="GO" id="GO:0042866">
    <property type="term" value="P:pyruvate biosynthetic process"/>
    <property type="evidence" value="ECO:0000266"/>
    <property type="project" value="RGD"/>
</dbReference>
<dbReference type="GO" id="GO:0043200">
    <property type="term" value="P:response to amino acid"/>
    <property type="evidence" value="ECO:0000270"/>
    <property type="project" value="RGD"/>
</dbReference>
<dbReference type="GO" id="GO:0033590">
    <property type="term" value="P:response to cobalamin"/>
    <property type="evidence" value="ECO:0000270"/>
    <property type="project" value="RGD"/>
</dbReference>
<dbReference type="GO" id="GO:0031667">
    <property type="term" value="P:response to nutrient levels"/>
    <property type="evidence" value="ECO:0000270"/>
    <property type="project" value="RGD"/>
</dbReference>
<dbReference type="CDD" id="cd06448">
    <property type="entry name" value="L-Ser-dehyd"/>
    <property type="match status" value="1"/>
</dbReference>
<dbReference type="FunFam" id="3.40.50.1100:FF:000031">
    <property type="entry name" value="L-serine dehydratase/L-threonine deaminase"/>
    <property type="match status" value="1"/>
</dbReference>
<dbReference type="FunFam" id="3.40.50.1100:FF:000106">
    <property type="entry name" value="L-serine dehydratase/L-threonine deaminase"/>
    <property type="match status" value="1"/>
</dbReference>
<dbReference type="FunFam" id="3.40.50.1100:FF:000135">
    <property type="entry name" value="L-serine dehydratase/L-threonine deaminase"/>
    <property type="match status" value="1"/>
</dbReference>
<dbReference type="Gene3D" id="3.40.50.1100">
    <property type="match status" value="4"/>
</dbReference>
<dbReference type="InterPro" id="IPR050147">
    <property type="entry name" value="Ser/Thr_Dehydratase"/>
</dbReference>
<dbReference type="InterPro" id="IPR000634">
    <property type="entry name" value="Ser/Thr_deHydtase_PyrdxlP-BS"/>
</dbReference>
<dbReference type="InterPro" id="IPR001926">
    <property type="entry name" value="TrpB-like_PALP"/>
</dbReference>
<dbReference type="InterPro" id="IPR036052">
    <property type="entry name" value="TrpB-like_PALP_sf"/>
</dbReference>
<dbReference type="PANTHER" id="PTHR48078:SF8">
    <property type="entry name" value="L-SERINE DEHYDRATASE_L-THREONINE DEAMINASE"/>
    <property type="match status" value="1"/>
</dbReference>
<dbReference type="PANTHER" id="PTHR48078">
    <property type="entry name" value="THREONINE DEHYDRATASE, MITOCHONDRIAL-RELATED"/>
    <property type="match status" value="1"/>
</dbReference>
<dbReference type="Pfam" id="PF00291">
    <property type="entry name" value="PALP"/>
    <property type="match status" value="2"/>
</dbReference>
<dbReference type="SUPFAM" id="SSF53686">
    <property type="entry name" value="Tryptophan synthase beta subunit-like PLP-dependent enzymes"/>
    <property type="match status" value="1"/>
</dbReference>
<dbReference type="PROSITE" id="PS00165">
    <property type="entry name" value="DEHYDRATASE_SER_THR"/>
    <property type="match status" value="1"/>
</dbReference>
<sequence length="363" mass="38433">MAAQESLHVKTPLRDSMALSKVAGTSVFLKMDSSQPSGSFKIRGIGHLCKMKAKQGCKHFVCSSVVQIWGSRMRGRSHSGDEQPHVRSQALLPDTPSPLTAGNAGMATAYAARRLGLPATIVVPSTTPALTIERLKNEGATVEVVGEMLDEAIQLAKALEKNNPGWVYISPFDDPLIWEGHTSLVKELKETLSAKPGAIVLSVGGGGLLCGVVQGLREVGWEDVPIIAMETFGAHSFHAAVKEGKLVTLPKITSVAKALGVNTVGAQTLKLFYEHPIFSEVISDQEAVTAIEKFVDDEKILVEPACGAALAAVYSGVVCRLQAEGRLQTPLASLVVIVCGGSNISLAQLQALKAQLGLNELLK</sequence>
<name>SDHL_RAT</name>
<reference key="1">
    <citation type="journal article" date="1988" name="Proc. Natl. Acad. Sci. U.S.A.">
        <title>Isolation and nucleotide sequence of the cDNA for rat liver serine dehydratase mRNA and structures of the 5' and 3' flanking regions of the serine dehydratase gene.</title>
        <authorList>
            <person name="Ogawa H."/>
            <person name="Miller D.A."/>
            <person name="Dunn T."/>
            <person name="Su Y."/>
            <person name="Burcham J.M."/>
            <person name="Peraino C."/>
            <person name="Fujioka M."/>
            <person name="Babcock K."/>
            <person name="Pitot H.C."/>
        </authorList>
    </citation>
    <scope>NUCLEOTIDE SEQUENCE [MRNA] (ISOFORM 1)</scope>
    <scope>PROTEIN SEQUENCE OF 6-27 AND 175-190</scope>
</reference>
<reference key="2">
    <citation type="journal article" date="1988" name="Nucleic Acids Res.">
        <title>Sequence of the rat serine dehydratase gene.</title>
        <authorList>
            <person name="Ogawa H."/>
            <person name="Su Y."/>
            <person name="Dunn T."/>
            <person name="Miller D.A."/>
            <person name="Matsuda Y."/>
            <person name="Fujioka M."/>
            <person name="Pitot H.C."/>
        </authorList>
    </citation>
    <scope>NUCLEOTIDE SEQUENCE [GENOMIC DNA]</scope>
</reference>
<reference key="3">
    <citation type="journal article" date="1988" name="FEBS Lett.">
        <title>Primary structure of rat liver serine dehydratase deduced from the cDNA sequence.</title>
        <authorList>
            <person name="Noda C."/>
            <person name="Ito K."/>
            <person name="Nakamura T."/>
            <person name="Ichihara A."/>
        </authorList>
    </citation>
    <scope>NUCLEOTIDE SEQUENCE [MRNA] (ISOFORM 2)</scope>
    <source>
        <tissue>Liver</tissue>
    </source>
</reference>
<reference key="4">
    <citation type="journal article" date="2004" name="Genome Res.">
        <title>The status, quality, and expansion of the NIH full-length cDNA project: the Mammalian Gene Collection (MGC).</title>
        <authorList>
            <consortium name="The MGC Project Team"/>
        </authorList>
    </citation>
    <scope>NUCLEOTIDE SEQUENCE [LARGE SCALE MRNA] (ISOFORM 2)</scope>
    <source>
        <tissue>Liver</tissue>
    </source>
</reference>
<reference key="5">
    <citation type="journal article" date="1990" name="Ital. J. Biochem.">
        <title>Primary structure of rat liver L-threonine deaminase.</title>
        <authorList>
            <person name="Leoncini R."/>
            <person name="Henschen A."/>
            <person name="Krieglstein K."/>
            <person name="Calvete J.J."/>
            <person name="Pagani R."/>
            <person name="Marinello E."/>
        </authorList>
    </citation>
    <scope>PROTEIN SEQUENCE OF 2-363 (ISOFORM 2)</scope>
    <source>
        <strain>Wistar</strain>
        <tissue>Liver</tissue>
    </source>
</reference>
<reference key="6">
    <citation type="journal article" date="1989" name="Biochim. Biophys. Acta">
        <title>The peptide sequences near the bound pyridoxal phosphate are conserved in serine dehydratase from rat liver, and threonine dehydratases from yeast and Escherichia coli.</title>
        <authorList>
            <person name="Ogawa H."/>
            <person name="Konishi K."/>
            <person name="Fujioka M."/>
        </authorList>
    </citation>
    <scope>PROTEIN SEQUENCE OF 2-5 AND 31-50</scope>
    <scope>CLEAVAGE OF INITIATOR METHIONINE</scope>
    <scope>ACETYLATION AT ALA-2</scope>
    <scope>PYRIDOXAL PHOSPHATE AT LYS-41</scope>
    <scope>COFACTOR</scope>
    <source>
        <tissue>Liver</tissue>
    </source>
</reference>
<reference key="7">
    <citation type="journal article" date="1975" name="Am. J. Pathol.">
        <title>Immunohistochemical demonstration of serine dehydratase in rat liver.</title>
        <authorList>
            <person name="Kitagawa T."/>
            <person name="Pitot H.C."/>
        </authorList>
    </citation>
    <scope>SUBCELLULAR LOCATION</scope>
    <scope>TISSUE SPECIFICITY</scope>
</reference>
<reference key="8">
    <citation type="journal article" date="1990" name="Ital. J. Biochem.">
        <title>Amino acid sequence around the pyridoxal 5'-phosphate binding site of rat liver L-threonine deaminase.</title>
        <authorList>
            <person name="Leoncini R."/>
            <person name="Henschen A."/>
            <person name="Krieglstein K."/>
            <person name="Calvete J.J."/>
            <person name="Pagani R."/>
            <person name="Marinello E."/>
        </authorList>
    </citation>
    <scope>PYRIDOXAL PHOSPHATE AT LYS-41</scope>
    <scope>COFACTOR</scope>
</reference>
<reference key="9">
    <citation type="journal article" date="1994" name="Enzyme Protein">
        <title>Properties of rat liver L-threonine deaminase.</title>
        <authorList>
            <person name="Pagani R."/>
            <person name="Leoncini R."/>
            <person name="Pizzichini M."/>
            <person name="Vannoni D."/>
            <person name="Tabucci A."/>
            <person name="Marinello E."/>
        </authorList>
    </citation>
    <scope>FUNCTION</scope>
    <scope>CATALYTIC ACTIVITY</scope>
    <scope>BIOPHYSICOCHEMICAL PROPERTIES</scope>
    <source>
        <tissue>Liver</tissue>
    </source>
</reference>
<reference key="10">
    <citation type="journal article" date="2002" name="Int. J. Biochem. Cell Biol.">
        <title>Evidence for a dimeric structure of rat liver serine dehydratase.</title>
        <authorList>
            <person name="Ogawa H."/>
            <person name="Gomi T."/>
            <person name="Takusagawa F."/>
            <person name="Masuda T."/>
            <person name="Goto T."/>
            <person name="Kan T."/>
            <person name="Huh N.H."/>
        </authorList>
    </citation>
    <scope>SUBUNIT</scope>
</reference>
<reference key="11">
    <citation type="journal article" date="2005" name="Int. J. Biochem. Cell Biol.">
        <title>Some biochemical and histochemical properties of human liver serine dehydratase.</title>
        <authorList>
            <person name="Kashii T."/>
            <person name="Gomi T."/>
            <person name="Oya T."/>
            <person name="Ishii Y."/>
            <person name="Oda H."/>
            <person name="Maruyama M."/>
            <person name="Kobayashi M."/>
            <person name="Masuda T."/>
            <person name="Yamazaki M."/>
            <person name="Nagata T."/>
            <person name="Tsukada K."/>
            <person name="Nakajima A."/>
            <person name="Tatsu K."/>
            <person name="Mori H."/>
            <person name="Takusagawa F."/>
            <person name="Ogawa H."/>
            <person name="Pitot H.C."/>
        </authorList>
    </citation>
    <scope>FUNCTION</scope>
    <scope>CATALYTIC ACTIVITY</scope>
    <scope>SUBUNIT</scope>
    <scope>BIOPHYSICOCHEMICAL PROPERTIES</scope>
    <scope>TISSUE SPECIFICITY</scope>
</reference>
<reference key="12">
    <citation type="journal article" date="2003" name="Biochemistry">
        <title>Crystal structure of serine dehydratase from rat liver.</title>
        <authorList>
            <person name="Yamada T."/>
            <person name="Komoto J."/>
            <person name="Takata Y."/>
            <person name="Ogawa H."/>
            <person name="Pitot H.C."/>
            <person name="Takusagawa F."/>
        </authorList>
    </citation>
    <scope>X-RAY CRYSTALLOGRAPHY (2.6 ANGSTROMS)</scope>
    <scope>SUBUNIT</scope>
    <scope>COFACTOR</scope>
</reference>
<proteinExistence type="evidence at protein level"/>
<protein>
    <recommendedName>
        <fullName>L-serine dehydratase/L-threonine deaminase</fullName>
        <shortName>SDH</shortName>
        <ecNumber evidence="5 9">4.3.1.17</ecNumber>
    </recommendedName>
    <alternativeName>
        <fullName>L-serine deaminase</fullName>
    </alternativeName>
    <alternativeName>
        <fullName>L-threonine dehydratase</fullName>
        <shortName>TDH</shortName>
        <ecNumber evidence="5 9">4.3.1.19</ecNumber>
    </alternativeName>
</protein>